<dbReference type="EMBL" id="AE009948">
    <property type="protein sequence ID" value="AAM98973.1"/>
    <property type="molecule type" value="Genomic_DNA"/>
</dbReference>
<dbReference type="RefSeq" id="NP_687101.1">
    <property type="nucleotide sequence ID" value="NC_004116.1"/>
</dbReference>
<dbReference type="RefSeq" id="WP_000960950.1">
    <property type="nucleotide sequence ID" value="NC_004116.1"/>
</dbReference>
<dbReference type="SMR" id="Q8E2C6"/>
<dbReference type="STRING" id="208435.SAG0065"/>
<dbReference type="GeneID" id="93793079"/>
<dbReference type="KEGG" id="sag:SAG0065"/>
<dbReference type="PATRIC" id="fig|208435.3.peg.64"/>
<dbReference type="HOGENOM" id="CLU_078858_2_1_9"/>
<dbReference type="OrthoDB" id="9802589at2"/>
<dbReference type="PRO" id="PR:Q8E2C6"/>
<dbReference type="Proteomes" id="UP000000821">
    <property type="component" value="Chromosome"/>
</dbReference>
<dbReference type="GO" id="GO:0022625">
    <property type="term" value="C:cytosolic large ribosomal subunit"/>
    <property type="evidence" value="ECO:0007669"/>
    <property type="project" value="TreeGrafter"/>
</dbReference>
<dbReference type="GO" id="GO:0019843">
    <property type="term" value="F:rRNA binding"/>
    <property type="evidence" value="ECO:0007669"/>
    <property type="project" value="UniProtKB-UniRule"/>
</dbReference>
<dbReference type="GO" id="GO:0003735">
    <property type="term" value="F:structural constituent of ribosome"/>
    <property type="evidence" value="ECO:0007669"/>
    <property type="project" value="InterPro"/>
</dbReference>
<dbReference type="GO" id="GO:0000049">
    <property type="term" value="F:tRNA binding"/>
    <property type="evidence" value="ECO:0007669"/>
    <property type="project" value="UniProtKB-KW"/>
</dbReference>
<dbReference type="GO" id="GO:0006412">
    <property type="term" value="P:translation"/>
    <property type="evidence" value="ECO:0007669"/>
    <property type="project" value="UniProtKB-UniRule"/>
</dbReference>
<dbReference type="CDD" id="cd01433">
    <property type="entry name" value="Ribosomal_L16_L10e"/>
    <property type="match status" value="1"/>
</dbReference>
<dbReference type="FunFam" id="3.90.1170.10:FF:000001">
    <property type="entry name" value="50S ribosomal protein L16"/>
    <property type="match status" value="1"/>
</dbReference>
<dbReference type="Gene3D" id="3.90.1170.10">
    <property type="entry name" value="Ribosomal protein L10e/L16"/>
    <property type="match status" value="1"/>
</dbReference>
<dbReference type="HAMAP" id="MF_01342">
    <property type="entry name" value="Ribosomal_uL16"/>
    <property type="match status" value="1"/>
</dbReference>
<dbReference type="InterPro" id="IPR047873">
    <property type="entry name" value="Ribosomal_uL16"/>
</dbReference>
<dbReference type="InterPro" id="IPR000114">
    <property type="entry name" value="Ribosomal_uL16_bact-type"/>
</dbReference>
<dbReference type="InterPro" id="IPR020798">
    <property type="entry name" value="Ribosomal_uL16_CS"/>
</dbReference>
<dbReference type="InterPro" id="IPR016180">
    <property type="entry name" value="Ribosomal_uL16_dom"/>
</dbReference>
<dbReference type="InterPro" id="IPR036920">
    <property type="entry name" value="Ribosomal_uL16_sf"/>
</dbReference>
<dbReference type="NCBIfam" id="TIGR01164">
    <property type="entry name" value="rplP_bact"/>
    <property type="match status" value="1"/>
</dbReference>
<dbReference type="PANTHER" id="PTHR12220">
    <property type="entry name" value="50S/60S RIBOSOMAL PROTEIN L16"/>
    <property type="match status" value="1"/>
</dbReference>
<dbReference type="PANTHER" id="PTHR12220:SF13">
    <property type="entry name" value="LARGE RIBOSOMAL SUBUNIT PROTEIN UL16M"/>
    <property type="match status" value="1"/>
</dbReference>
<dbReference type="Pfam" id="PF00252">
    <property type="entry name" value="Ribosomal_L16"/>
    <property type="match status" value="1"/>
</dbReference>
<dbReference type="PRINTS" id="PR00060">
    <property type="entry name" value="RIBOSOMALL16"/>
</dbReference>
<dbReference type="SUPFAM" id="SSF54686">
    <property type="entry name" value="Ribosomal protein L16p/L10e"/>
    <property type="match status" value="1"/>
</dbReference>
<dbReference type="PROSITE" id="PS00586">
    <property type="entry name" value="RIBOSOMAL_L16_1"/>
    <property type="match status" value="1"/>
</dbReference>
<dbReference type="PROSITE" id="PS00701">
    <property type="entry name" value="RIBOSOMAL_L16_2"/>
    <property type="match status" value="1"/>
</dbReference>
<name>RL16_STRA5</name>
<gene>
    <name evidence="1" type="primary">rplP</name>
    <name type="ordered locus">SAG0065</name>
</gene>
<organism>
    <name type="scientific">Streptococcus agalactiae serotype V (strain ATCC BAA-611 / 2603 V/R)</name>
    <dbReference type="NCBI Taxonomy" id="208435"/>
    <lineage>
        <taxon>Bacteria</taxon>
        <taxon>Bacillati</taxon>
        <taxon>Bacillota</taxon>
        <taxon>Bacilli</taxon>
        <taxon>Lactobacillales</taxon>
        <taxon>Streptococcaceae</taxon>
        <taxon>Streptococcus</taxon>
    </lineage>
</organism>
<sequence length="137" mass="15438">MLVPKRVKHRREFRGKMRGEAKGGKEVSFGEYGLQATTSHWITNRQIEAARIAMTRYMKRGGKVWIKIFPHKSYTAKAIGVRMGSGKGAPEGWVAPVKRGKVMFEIAGVSEEVAREALRLASHKLPVKCKFVKREAE</sequence>
<keyword id="KW-1185">Reference proteome</keyword>
<keyword id="KW-0687">Ribonucleoprotein</keyword>
<keyword id="KW-0689">Ribosomal protein</keyword>
<keyword id="KW-0694">RNA-binding</keyword>
<keyword id="KW-0699">rRNA-binding</keyword>
<keyword id="KW-0820">tRNA-binding</keyword>
<comment type="function">
    <text evidence="1">Binds 23S rRNA and is also seen to make contacts with the A and possibly P site tRNAs.</text>
</comment>
<comment type="subunit">
    <text evidence="1">Part of the 50S ribosomal subunit.</text>
</comment>
<comment type="similarity">
    <text evidence="1">Belongs to the universal ribosomal protein uL16 family.</text>
</comment>
<reference key="1">
    <citation type="journal article" date="2002" name="Proc. Natl. Acad. Sci. U.S.A.">
        <title>Complete genome sequence and comparative genomic analysis of an emerging human pathogen, serotype V Streptococcus agalactiae.</title>
        <authorList>
            <person name="Tettelin H."/>
            <person name="Masignani V."/>
            <person name="Cieslewicz M.J."/>
            <person name="Eisen J.A."/>
            <person name="Peterson S.N."/>
            <person name="Wessels M.R."/>
            <person name="Paulsen I.T."/>
            <person name="Nelson K.E."/>
            <person name="Margarit I."/>
            <person name="Read T.D."/>
            <person name="Madoff L.C."/>
            <person name="Wolf A.M."/>
            <person name="Beanan M.J."/>
            <person name="Brinkac L.M."/>
            <person name="Daugherty S.C."/>
            <person name="DeBoy R.T."/>
            <person name="Durkin A.S."/>
            <person name="Kolonay J.F."/>
            <person name="Madupu R."/>
            <person name="Lewis M.R."/>
            <person name="Radune D."/>
            <person name="Fedorova N.B."/>
            <person name="Scanlan D."/>
            <person name="Khouri H.M."/>
            <person name="Mulligan S."/>
            <person name="Carty H.A."/>
            <person name="Cline R.T."/>
            <person name="Van Aken S.E."/>
            <person name="Gill J."/>
            <person name="Scarselli M."/>
            <person name="Mora M."/>
            <person name="Iacobini E.T."/>
            <person name="Brettoni C."/>
            <person name="Galli G."/>
            <person name="Mariani M."/>
            <person name="Vegni F."/>
            <person name="Maione D."/>
            <person name="Rinaudo D."/>
            <person name="Rappuoli R."/>
            <person name="Telford J.L."/>
            <person name="Kasper D.L."/>
            <person name="Grandi G."/>
            <person name="Fraser C.M."/>
        </authorList>
    </citation>
    <scope>NUCLEOTIDE SEQUENCE [LARGE SCALE GENOMIC DNA]</scope>
    <source>
        <strain>ATCC BAA-611 / 2603 V/R</strain>
    </source>
</reference>
<accession>Q8E2C6</accession>
<proteinExistence type="inferred from homology"/>
<feature type="chain" id="PRO_0000062215" description="Large ribosomal subunit protein uL16">
    <location>
        <begin position="1"/>
        <end position="137"/>
    </location>
</feature>
<protein>
    <recommendedName>
        <fullName evidence="1">Large ribosomal subunit protein uL16</fullName>
    </recommendedName>
    <alternativeName>
        <fullName evidence="2">50S ribosomal protein L16</fullName>
    </alternativeName>
</protein>
<evidence type="ECO:0000255" key="1">
    <source>
        <dbReference type="HAMAP-Rule" id="MF_01342"/>
    </source>
</evidence>
<evidence type="ECO:0000305" key="2"/>